<name>ATPF_SALDC</name>
<feature type="chain" id="PRO_0000368742" description="ATP synthase subunit b">
    <location>
        <begin position="1"/>
        <end position="156"/>
    </location>
</feature>
<feature type="transmembrane region" description="Helical" evidence="1">
    <location>
        <begin position="11"/>
        <end position="31"/>
    </location>
</feature>
<comment type="function">
    <text evidence="1">F(1)F(0) ATP synthase produces ATP from ADP in the presence of a proton or sodium gradient. F-type ATPases consist of two structural domains, F(1) containing the extramembraneous catalytic core and F(0) containing the membrane proton channel, linked together by a central stalk and a peripheral stalk. During catalysis, ATP synthesis in the catalytic domain of F(1) is coupled via a rotary mechanism of the central stalk subunits to proton translocation.</text>
</comment>
<comment type="function">
    <text evidence="1">Component of the F(0) channel, it forms part of the peripheral stalk, linking F(1) to F(0).</text>
</comment>
<comment type="subunit">
    <text evidence="1">F-type ATPases have 2 components, F(1) - the catalytic core - and F(0) - the membrane proton channel. F(1) has five subunits: alpha(3), beta(3), gamma(1), delta(1), epsilon(1). F(0) has three main subunits: a(1), b(2) and c(10-14). The alpha and beta chains form an alternating ring which encloses part of the gamma chain. F(1) is attached to F(0) by a central stalk formed by the gamma and epsilon chains, while a peripheral stalk is formed by the delta and b chains.</text>
</comment>
<comment type="subcellular location">
    <subcellularLocation>
        <location evidence="1">Cell inner membrane</location>
        <topology evidence="1">Single-pass membrane protein</topology>
    </subcellularLocation>
</comment>
<comment type="similarity">
    <text evidence="1">Belongs to the ATPase B chain family.</text>
</comment>
<reference key="1">
    <citation type="journal article" date="2011" name="J. Bacteriol.">
        <title>Comparative genomics of 28 Salmonella enterica isolates: evidence for CRISPR-mediated adaptive sublineage evolution.</title>
        <authorList>
            <person name="Fricke W.F."/>
            <person name="Mammel M.K."/>
            <person name="McDermott P.F."/>
            <person name="Tartera C."/>
            <person name="White D.G."/>
            <person name="Leclerc J.E."/>
            <person name="Ravel J."/>
            <person name="Cebula T.A."/>
        </authorList>
    </citation>
    <scope>NUCLEOTIDE SEQUENCE [LARGE SCALE GENOMIC DNA]</scope>
    <source>
        <strain>CT_02021853</strain>
    </source>
</reference>
<proteinExistence type="inferred from homology"/>
<protein>
    <recommendedName>
        <fullName evidence="1">ATP synthase subunit b</fullName>
    </recommendedName>
    <alternativeName>
        <fullName evidence="1">ATP synthase F(0) sector subunit b</fullName>
    </alternativeName>
    <alternativeName>
        <fullName evidence="1">ATPase subunit I</fullName>
    </alternativeName>
    <alternativeName>
        <fullName evidence="1">F-type ATPase subunit b</fullName>
        <shortName evidence="1">F-ATPase subunit b</shortName>
    </alternativeName>
</protein>
<evidence type="ECO:0000255" key="1">
    <source>
        <dbReference type="HAMAP-Rule" id="MF_01398"/>
    </source>
</evidence>
<keyword id="KW-0066">ATP synthesis</keyword>
<keyword id="KW-0997">Cell inner membrane</keyword>
<keyword id="KW-1003">Cell membrane</keyword>
<keyword id="KW-0138">CF(0)</keyword>
<keyword id="KW-0375">Hydrogen ion transport</keyword>
<keyword id="KW-0406">Ion transport</keyword>
<keyword id="KW-0472">Membrane</keyword>
<keyword id="KW-0812">Transmembrane</keyword>
<keyword id="KW-1133">Transmembrane helix</keyword>
<keyword id="KW-0813">Transport</keyword>
<accession>B5FN37</accession>
<gene>
    <name evidence="1" type="primary">atpF</name>
    <name type="ordered locus">SeD_A4259</name>
</gene>
<dbReference type="EMBL" id="CP001144">
    <property type="protein sequence ID" value="ACH76893.1"/>
    <property type="molecule type" value="Genomic_DNA"/>
</dbReference>
<dbReference type="RefSeq" id="WP_001052212.1">
    <property type="nucleotide sequence ID" value="NC_011205.1"/>
</dbReference>
<dbReference type="SMR" id="B5FN37"/>
<dbReference type="GeneID" id="66758158"/>
<dbReference type="KEGG" id="sed:SeD_A4259"/>
<dbReference type="HOGENOM" id="CLU_079215_4_5_6"/>
<dbReference type="Proteomes" id="UP000008322">
    <property type="component" value="Chromosome"/>
</dbReference>
<dbReference type="GO" id="GO:0005886">
    <property type="term" value="C:plasma membrane"/>
    <property type="evidence" value="ECO:0007669"/>
    <property type="project" value="UniProtKB-SubCell"/>
</dbReference>
<dbReference type="GO" id="GO:0045259">
    <property type="term" value="C:proton-transporting ATP synthase complex"/>
    <property type="evidence" value="ECO:0007669"/>
    <property type="project" value="UniProtKB-KW"/>
</dbReference>
<dbReference type="GO" id="GO:0046933">
    <property type="term" value="F:proton-transporting ATP synthase activity, rotational mechanism"/>
    <property type="evidence" value="ECO:0007669"/>
    <property type="project" value="UniProtKB-UniRule"/>
</dbReference>
<dbReference type="GO" id="GO:0046961">
    <property type="term" value="F:proton-transporting ATPase activity, rotational mechanism"/>
    <property type="evidence" value="ECO:0007669"/>
    <property type="project" value="TreeGrafter"/>
</dbReference>
<dbReference type="CDD" id="cd06503">
    <property type="entry name" value="ATP-synt_Fo_b"/>
    <property type="match status" value="1"/>
</dbReference>
<dbReference type="FunFam" id="1.20.5.620:FF:000001">
    <property type="entry name" value="ATP synthase subunit b"/>
    <property type="match status" value="1"/>
</dbReference>
<dbReference type="Gene3D" id="1.20.5.620">
    <property type="entry name" value="F1F0 ATP synthase subunit B, membrane domain"/>
    <property type="match status" value="1"/>
</dbReference>
<dbReference type="HAMAP" id="MF_01398">
    <property type="entry name" value="ATP_synth_b_bprime"/>
    <property type="match status" value="1"/>
</dbReference>
<dbReference type="InterPro" id="IPR028987">
    <property type="entry name" value="ATP_synth_B-like_membr_sf"/>
</dbReference>
<dbReference type="InterPro" id="IPR002146">
    <property type="entry name" value="ATP_synth_b/b'su_bac/chlpt"/>
</dbReference>
<dbReference type="InterPro" id="IPR005864">
    <property type="entry name" value="ATP_synth_F0_bsu_bac"/>
</dbReference>
<dbReference type="InterPro" id="IPR050059">
    <property type="entry name" value="ATP_synthase_B_chain"/>
</dbReference>
<dbReference type="NCBIfam" id="TIGR01144">
    <property type="entry name" value="ATP_synt_b"/>
    <property type="match status" value="1"/>
</dbReference>
<dbReference type="NCBIfam" id="NF004411">
    <property type="entry name" value="PRK05759.1-2"/>
    <property type="match status" value="1"/>
</dbReference>
<dbReference type="NCBIfam" id="NF004413">
    <property type="entry name" value="PRK05759.1-4"/>
    <property type="match status" value="1"/>
</dbReference>
<dbReference type="PANTHER" id="PTHR33445:SF1">
    <property type="entry name" value="ATP SYNTHASE SUBUNIT B"/>
    <property type="match status" value="1"/>
</dbReference>
<dbReference type="PANTHER" id="PTHR33445">
    <property type="entry name" value="ATP SYNTHASE SUBUNIT B', CHLOROPLASTIC"/>
    <property type="match status" value="1"/>
</dbReference>
<dbReference type="Pfam" id="PF00430">
    <property type="entry name" value="ATP-synt_B"/>
    <property type="match status" value="1"/>
</dbReference>
<dbReference type="SUPFAM" id="SSF81573">
    <property type="entry name" value="F1F0 ATP synthase subunit B, membrane domain"/>
    <property type="match status" value="1"/>
</dbReference>
<organism>
    <name type="scientific">Salmonella dublin (strain CT_02021853)</name>
    <dbReference type="NCBI Taxonomy" id="439851"/>
    <lineage>
        <taxon>Bacteria</taxon>
        <taxon>Pseudomonadati</taxon>
        <taxon>Pseudomonadota</taxon>
        <taxon>Gammaproteobacteria</taxon>
        <taxon>Enterobacterales</taxon>
        <taxon>Enterobacteriaceae</taxon>
        <taxon>Salmonella</taxon>
    </lineage>
</organism>
<sequence length="156" mass="17365">MNLNATILGQAIAFILFVWFCMKYVWPPLMAAIEKRQKEIADGLASAERAHKDLDLAKASATDQLKKAKAEAQVIIEQANKRRAQILDEAKTEAEQERTKIVAQAQAEIEAERKRAREELRKQVAILAVAGAEKIIERSVDEAANSDIVDKLVAEL</sequence>